<name>IGF1R_RAT</name>
<gene>
    <name type="primary">Igf1r</name>
</gene>
<keyword id="KW-0067">ATP-binding</keyword>
<keyword id="KW-1003">Cell membrane</keyword>
<keyword id="KW-0165">Cleavage on pair of basic residues</keyword>
<keyword id="KW-1015">Disulfide bond</keyword>
<keyword id="KW-0325">Glycoprotein</keyword>
<keyword id="KW-1017">Isopeptide bond</keyword>
<keyword id="KW-0418">Kinase</keyword>
<keyword id="KW-0472">Membrane</keyword>
<keyword id="KW-0547">Nucleotide-binding</keyword>
<keyword id="KW-0597">Phosphoprotein</keyword>
<keyword id="KW-0675">Receptor</keyword>
<keyword id="KW-1185">Reference proteome</keyword>
<keyword id="KW-0677">Repeat</keyword>
<keyword id="KW-0732">Signal</keyword>
<keyword id="KW-0808">Transferase</keyword>
<keyword id="KW-0812">Transmembrane</keyword>
<keyword id="KW-1133">Transmembrane helix</keyword>
<keyword id="KW-0829">Tyrosine-protein kinase</keyword>
<keyword id="KW-0832">Ubl conjugation</keyword>
<reference key="1">
    <citation type="journal article" date="1995" name="Circ. Res.">
        <title>Inhibition of vascular smooth muscle cell growth through antisense transcription of a rat insulin-like growth factor I receptor cDNA.</title>
        <authorList>
            <person name="Du J."/>
            <person name="Delafontaine P."/>
        </authorList>
    </citation>
    <scope>NUCLEOTIDE SEQUENCE [MRNA]</scope>
    <source>
        <tissue>Brain</tissue>
    </source>
</reference>
<reference key="2">
    <citation type="journal article" date="1989" name="Proc. Natl. Acad. Sci. U.S.A.">
        <title>Developmental regulation of the rat insulin-like growth factor I receptor gene.</title>
        <authorList>
            <person name="Werner H."/>
            <person name="Woloschak M."/>
            <person name="Adamo M."/>
            <person name="Shen-Orr Z."/>
            <person name="Roberts C.T. Jr."/>
            <person name="Leroith D."/>
        </authorList>
    </citation>
    <scope>NUCLEOTIDE SEQUENCE [MRNA] OF 1-364</scope>
    <source>
        <strain>Sprague-Dawley</strain>
    </source>
</reference>
<reference key="3">
    <citation type="journal article" date="1992" name="Biochem. Biophys. Res. Commun.">
        <title>A new member of the insulin receptor family, insulin receptor-related receptor, is expressed preferentially in the kidney.</title>
        <authorList>
            <person name="Kurachi H."/>
            <person name="Jobo K."/>
            <person name="Ohta M."/>
            <person name="Kawasaki T."/>
            <person name="Itoh N."/>
        </authorList>
    </citation>
    <scope>NUCLEOTIDE SEQUENCE [MRNA] OF 913-1017</scope>
</reference>
<reference key="4">
    <citation type="journal article" date="2006" name="Am. J. Physiol.">
        <title>Insulin and IGF-I action on insulin receptors, IGF-I receptors, and hybrid insulin/IGF-I receptors in vascular smooth muscle cells.</title>
        <authorList>
            <person name="Johansson G.S."/>
            <person name="Arnqvist H.J."/>
        </authorList>
    </citation>
    <scope>FUNCTION</scope>
    <scope>FORMATION OF A HYBRID RECEPTOR WITH INSR</scope>
</reference>
<evidence type="ECO:0000250" key="1"/>
<evidence type="ECO:0000250" key="2">
    <source>
        <dbReference type="UniProtKB" id="P08069"/>
    </source>
</evidence>
<evidence type="ECO:0000250" key="3">
    <source>
        <dbReference type="UniProtKB" id="Q60751"/>
    </source>
</evidence>
<evidence type="ECO:0000255" key="4"/>
<evidence type="ECO:0000255" key="5">
    <source>
        <dbReference type="PROSITE-ProRule" id="PRU00159"/>
    </source>
</evidence>
<evidence type="ECO:0000255" key="6">
    <source>
        <dbReference type="PROSITE-ProRule" id="PRU00316"/>
    </source>
</evidence>
<evidence type="ECO:0000255" key="7">
    <source>
        <dbReference type="PROSITE-ProRule" id="PRU10028"/>
    </source>
</evidence>
<evidence type="ECO:0000256" key="8">
    <source>
        <dbReference type="SAM" id="MobiDB-lite"/>
    </source>
</evidence>
<evidence type="ECO:0000269" key="9">
    <source>
    </source>
</evidence>
<evidence type="ECO:0000305" key="10"/>
<accession>P24062</accession>
<sequence>MKSGSGGGSPTSLWGLVFLSAALSLWPTSGEICGPGIDIRNDYQQLKRLENCTVIEGFLHILLISKAEDYRSYRFPKLTVITEYLLLFRVAGLESLGDLFPNLTVIRGWKLFYNYALVIFEMTNLKDIGLYNLRNITRGAIRIEKNADLCYLSTIDWSLILDAVSNNYIVGNKPPKECGDLCPGTLEEKPMCEKTTINNEYNYRCWTTNRCQKMCPSVCGKRACTENNECCHPECLGSCHTPDDNTTCVACRHYYYKGVCVPACPPGTYRFEGWRCVDRDFCANIPNAESSDSDGFVIHDGECMQECPSGFIRNSTQSMYCIPCEGPCPKVCGDEEKKTKTIDSVTSAQMLQGCTILKGNLLINIRRGNNIASELENFMGLIEVVTGYVKIRHSHALVSLSFLKNLRLILGEEQLEGNYSFYVLDNQNLQQLWDWNHRNLTVRSGKMYFAFNPKLCVSEIYRMEEVTGTKGRQSKGDINTRNNGERASCESDVLRFTSTTTWKNRIIITWHRYRPPDYRDLISFTVYYKEAPFKNVTEYDGQDACGSNSWNMVDVDLPPNKEGEPGILLHGLKPWTQYAVYVKAVTLTMVENDHIRGAKSEILYIRTNASVPSIPLDVLSASNSSSQLIVKWNPPTLPNGNLSYYIVRWQRQPQDGYLFRHNYCSKDKIPIRKYADGTIDVEEVTENPKTEVCGGDKGPCCACPKTEAEKQAEKEEAEYRKVFENFLHNSIFVPRPERRRRDVLQVANTTMSSRSRNTTVADTYNITDPEEFETEYPFFESRVDNKERTVISNLRPFTLYRIDIHSCNHEAEKLGCSASNFVFARTMPAEGADDIPGPVTWEPRPENSIFLKWPEPENPNGLILMYEIKYGSQVEDQRECVSRQEYRKYGGAKLNRLNPGNYTARIQATSLSGNGSWTDPVFFYVPAKTTYENFMHLIIALPVAILLIVGGLVIMLYVFHRKRNNSRLGNGVLYASVNPEYFSAADVYVPDEWEVAREKITMNRELGQGSFGMVYEGVAKGVVKDEPETRVAIKTVNEAASMRERIEFLNEASVMKEFNCHHVVRLLGVVSQGQPTLVIMELMTRGDLKSYLRSLRPEVENNLVLIPPSLSKMIQMAGEIADGMAYLNANKFVHRDLAARNCMVAEDFTVKIGDFGMTRDIYETDYYRKGGKGLLPVRWMSPESLKDGVFTTHSDVWSFGVVLWEIATLAEQPYQGLSNEQVLRFVMEGGLLDKPDNCPDMLFELMRMCWQYNPKMRPSFLEIIGSIKDEMEPSFQEVSFYYSEENKPPEPEELEMELELEPENMESVPLDPSASSASLPLPERHSGHKAENGPGVLVLRASFDERQPYAHMNGGRANERALPLPQSSTC</sequence>
<comment type="function">
    <text evidence="1 9">Receptor tyrosine kinase which mediates actions of insulin-like growth factor 1 (IGF1). Binds IGF1 with high affinity and IGF2 and insulin (INS) with a lower affinity. The activated IGF1R is involved in cell growth and survival control. IGF1R is crucial for tumor transformation and survival of malignant cell. Ligand binding activates the receptor kinase, leading to receptor autophosphorylation, and tyrosines phosphorylation of multiple substrates, that function as signaling adapter proteins including, the insulin-receptor substrates (IRS1/2), Shc and 14-3-3 proteins. Phosphorylation of IRSs proteins lead to the activation of two main signaling pathways: the PI3K-AKT/PKB pathway and the Ras-MAPK pathway. The result of activating the MAPK pathway is increased cellular proliferation, whereas activating the PI3K pathway inhibits apoptosis and stimulates protein synthesis. Phosphorylated IRS1 can activate the 85 kDa regulatory subunit of PI3K (PIK3R1), leading to activation of several downstream substrates, including protein AKT/PKB. AKT phosphorylation, in turn, enhances protein synthesis through mTOR activation and triggers the antiapoptotic effects of IGFIR through phosphorylation and inactivation of BAD. In parallel to PI3K-driven signaling, recruitment of Grb2/SOS by phosphorylated IRS1 or Shc leads to recruitment of Ras and activation of the ras-MAPK pathway. In addition to these two main signaling pathways IGF1R signals also through the Janus kinase/signal transducer and activator of transcription pathway (JAK/STAT). Phosphorylation of JAK proteins can lead to phosphorylation/activation of signal transducers and activators of transcription (STAT) proteins. In particular activation of STAT3, may be essential for the transforming activity of IGF1R. The JAK/STAT pathway activates gene transcription and may be responsible for the transforming activity. JNK kinases can also be activated by the IGF1R. IGF1 exerts inhibiting activities on JNK activation via phosphorylation and inhibition of MAP3K5/ASK1, which is able to directly associate with the IGF1R (By similarity). When present in a hybrid receptor with INSR, binds IGF1 (By similarity).</text>
</comment>
<comment type="catalytic activity">
    <reaction evidence="7">
        <text>L-tyrosyl-[protein] + ATP = O-phospho-L-tyrosyl-[protein] + ADP + H(+)</text>
        <dbReference type="Rhea" id="RHEA:10596"/>
        <dbReference type="Rhea" id="RHEA-COMP:10136"/>
        <dbReference type="Rhea" id="RHEA-COMP:20101"/>
        <dbReference type="ChEBI" id="CHEBI:15378"/>
        <dbReference type="ChEBI" id="CHEBI:30616"/>
        <dbReference type="ChEBI" id="CHEBI:46858"/>
        <dbReference type="ChEBI" id="CHEBI:61978"/>
        <dbReference type="ChEBI" id="CHEBI:456216"/>
        <dbReference type="EC" id="2.7.10.1"/>
    </reaction>
</comment>
<comment type="activity regulation">
    <text evidence="1">Activated by autophosphorylation at Tyr-1162, Tyr-1166 and Tyr-1167 on the kinase activation loop; phosphorylation at all three tyrosine residues is required for optimal kinase activity. Inhibited by MSC1609119A-1, BMS-754807, PQIP, benzimidazole pyridinone, isoquinolinedione, bis-azaindole, 3-cyanoquinoline, 2,4-bis-arylamino-1,3-pyrimidine, pyrrolopyrimidine, pyrrole-5-carboxaldehyde, picropodophyllin (PPP), tyrphostin derivatives. While most inhibitors bind to the ATP binding pocket, MSC1609119A-1 functions as allosteric inhibitor and binds close to the DFG motif and the activation loop (By similarity). Dephosphorylated by PTPN1 (By similarity).</text>
</comment>
<comment type="subunit">
    <text evidence="2">Tetramer of 2 alpha and 2 beta chains linked by disulfide bonds. The alpha chains contribute to the formation of the ligand-binding domain, while the beta chain carries the kinase domain. Interacts with PIK3R1 and with the PTB/PID domains of IRS1 and SHC1 in vitro when autophosphorylated on tyrosine residues. Forms a hybrid receptor with INSR, the hybrid is a tetramer consisting of 1 alpha chain and 1 beta chain of INSR and 1 alpha chain and 1 beta chain of IGF1R. Interacts with ARRB1 and ARRB2. Interacts with GRB10. Interacts with RACK1 (By similarity). Interacts with SOCS1, SOCS2 and SOCS3 (By similarity). Interacts with 14-3-3 proteins (By similarity). Interacts with NMD2 (By similarity). Interacts with MAP3K5 (By similarity). Interacts with STAT3. Found in a ternary complex with IGF1 and ITGAV:ITGB3 or ITGA6:ITGB4 (By similarity). Interacts (nascent precursor form) with ZFAND2B (By similarity).</text>
</comment>
<comment type="subcellular location">
    <subcellularLocation>
        <location evidence="1">Cell membrane</location>
        <topology evidence="1">Single-pass type I membrane protein</topology>
    </subcellularLocation>
</comment>
<comment type="PTM">
    <text evidence="2 3">Autophosphorylated on tyrosine residues in response to ligand binding (By similarity). Autophosphorylation occurs in trans, i.e. one subunit of the dimeric receptor phosphorylates tyrosine residues on the other subunit (By similarity). Autophosphorylation occurs in a sequential manner; Tyr-1166 is predominantly phosphorylated first, followed by phosphorylation of Tyr-1162 and Tyr-1167 (By similarity). While every single phosphorylation increases kinase activity, all three tyrosine residues in the kinase activation loop (Tyr-1162, Tyr-1166 and Tyr-1167) have to be phosphorylated for optimal activity (By similarity). Can be autophosphorylated at additional tyrosine residues (in vitro) (By similarity). Autophosphorylated is followed by phosphorylation of juxtamembrane tyrosines and C-terminal serines (By similarity). May also be phosphorylated at Tyr-1162 and Tyr-1167 by mTORC2 (By similarity). Phosphorylation of Tyr-981 is required for IRS1- and SHC1-binding (By similarity). Phosphorylation of Ser-1279 by GSK-3beta restrains kinase activity and promotes cell surface expression, it requires a priming phosphorylation at Ser-1283 (By similarity). Dephosphorylated by PTPN1 (By similarity).</text>
</comment>
<comment type="PTM">
    <text evidence="1">Polyubiquitinated at Lys-1169 and Lys-1172 through both 'Lys-48' and 'Lys-29' linkages, promoting receptor endocytosis and subsequent degradation by the proteasome. Ubiquitination is facilitated by pre-existing phosphorylation (By similarity).</text>
</comment>
<comment type="PTM">
    <text evidence="1">Sumoylated with SUMO1.</text>
</comment>
<comment type="PTM">
    <text evidence="1">Controlled by regulated intramembrane proteolysis (RIP). Undergoes metalloprotease-dependent constitutive ectodomain shedding to produce a membrane-anchored 52 kDa C-Terminal fragment which is further processed by presenilin gamma-secretase to yield an intracellular 50 kDa fragment (By similarity).</text>
</comment>
<comment type="similarity">
    <text evidence="5">Belongs to the protein kinase superfamily. Tyr protein kinase family. Insulin receptor subfamily.</text>
</comment>
<organism>
    <name type="scientific">Rattus norvegicus</name>
    <name type="common">Rat</name>
    <dbReference type="NCBI Taxonomy" id="10116"/>
    <lineage>
        <taxon>Eukaryota</taxon>
        <taxon>Metazoa</taxon>
        <taxon>Chordata</taxon>
        <taxon>Craniata</taxon>
        <taxon>Vertebrata</taxon>
        <taxon>Euteleostomi</taxon>
        <taxon>Mammalia</taxon>
        <taxon>Eutheria</taxon>
        <taxon>Euarchontoglires</taxon>
        <taxon>Glires</taxon>
        <taxon>Rodentia</taxon>
        <taxon>Myomorpha</taxon>
        <taxon>Muroidea</taxon>
        <taxon>Muridae</taxon>
        <taxon>Murinae</taxon>
        <taxon>Rattus</taxon>
    </lineage>
</organism>
<protein>
    <recommendedName>
        <fullName>Insulin-like growth factor 1 receptor</fullName>
        <ecNumber>2.7.10.1</ecNumber>
    </recommendedName>
    <alternativeName>
        <fullName>Insulin-like growth factor I receptor</fullName>
        <shortName>IGF-I receptor</shortName>
    </alternativeName>
    <cdAntigenName>CD221</cdAntigenName>
    <component>
        <recommendedName>
            <fullName>Insulin-like growth factor 1 receptor alpha chain</fullName>
        </recommendedName>
    </component>
    <component>
        <recommendedName>
            <fullName>Insulin-like growth factor 1 receptor beta chain</fullName>
        </recommendedName>
    </component>
</protein>
<proteinExistence type="evidence at transcript level"/>
<feature type="signal peptide" evidence="4">
    <location>
        <begin position="1"/>
        <end position="30"/>
    </location>
</feature>
<feature type="chain" id="PRO_0000016685" description="Insulin-like growth factor 1 receptor alpha chain">
    <location>
        <begin position="31"/>
        <end position="737"/>
    </location>
</feature>
<feature type="chain" id="PRO_0000016686" description="Insulin-like growth factor 1 receptor beta chain">
    <location>
        <begin position="742"/>
        <end position="1370"/>
    </location>
</feature>
<feature type="topological domain" description="Extracellular" evidence="4">
    <location>
        <begin position="742"/>
        <end position="936"/>
    </location>
</feature>
<feature type="transmembrane region" description="Helical" evidence="4">
    <location>
        <begin position="937"/>
        <end position="960"/>
    </location>
</feature>
<feature type="topological domain" description="Cytoplasmic" evidence="4">
    <location>
        <begin position="961"/>
        <end position="1370"/>
    </location>
</feature>
<feature type="domain" description="Fibronectin type-III 1" evidence="6">
    <location>
        <begin position="490"/>
        <end position="610"/>
    </location>
</feature>
<feature type="domain" description="Fibronectin type-III 2" evidence="6">
    <location>
        <begin position="611"/>
        <end position="709"/>
    </location>
</feature>
<feature type="domain" description="Fibronectin type-III 3" evidence="6">
    <location>
        <begin position="835"/>
        <end position="928"/>
    </location>
</feature>
<feature type="domain" description="Protein kinase" evidence="5">
    <location>
        <begin position="1000"/>
        <end position="1275"/>
    </location>
</feature>
<feature type="region of interest" description="Disordered" evidence="8">
    <location>
        <begin position="1304"/>
        <end position="1370"/>
    </location>
</feature>
<feature type="short sequence motif" description="IRS1- and SHC1-binding" evidence="1">
    <location>
        <begin position="978"/>
        <end position="981"/>
    </location>
</feature>
<feature type="compositionally biased region" description="Low complexity" evidence="8">
    <location>
        <begin position="1305"/>
        <end position="1321"/>
    </location>
</feature>
<feature type="compositionally biased region" description="Basic and acidic residues" evidence="8">
    <location>
        <begin position="1322"/>
        <end position="1331"/>
    </location>
</feature>
<feature type="active site" description="Proton acceptor" evidence="5 7">
    <location>
        <position position="1136"/>
    </location>
</feature>
<feature type="binding site" evidence="5">
    <location>
        <begin position="1006"/>
        <end position="1014"/>
    </location>
    <ligand>
        <name>ATP</name>
        <dbReference type="ChEBI" id="CHEBI:30616"/>
    </ligand>
</feature>
<feature type="binding site" evidence="5">
    <location>
        <position position="1034"/>
    </location>
    <ligand>
        <name>ATP</name>
        <dbReference type="ChEBI" id="CHEBI:30616"/>
    </ligand>
</feature>
<feature type="modified residue" description="Phosphotyrosine" evidence="2">
    <location>
        <position position="981"/>
    </location>
</feature>
<feature type="modified residue" description="Phosphotyrosine; by autocatalysis" evidence="2">
    <location>
        <position position="1162"/>
    </location>
</feature>
<feature type="modified residue" description="Phosphotyrosine; by autocatalysis" evidence="2">
    <location>
        <position position="1166"/>
    </location>
</feature>
<feature type="modified residue" description="Phosphotyrosine; by autocatalysis" evidence="2">
    <location>
        <position position="1167"/>
    </location>
</feature>
<feature type="modified residue" description="Phosphoserine; by GSK3-beta" evidence="3">
    <location>
        <position position="1279"/>
    </location>
</feature>
<feature type="modified residue" description="Phosphoserine" evidence="3">
    <location>
        <position position="1283"/>
    </location>
</feature>
<feature type="glycosylation site" description="N-linked (GlcNAc...) asparagine" evidence="4">
    <location>
        <position position="51"/>
    </location>
</feature>
<feature type="glycosylation site" description="N-linked (GlcNAc...) asparagine" evidence="4">
    <location>
        <position position="102"/>
    </location>
</feature>
<feature type="glycosylation site" description="N-linked (GlcNAc...) asparagine" evidence="4">
    <location>
        <position position="135"/>
    </location>
</feature>
<feature type="glycosylation site" description="N-linked (GlcNAc...) asparagine" evidence="4">
    <location>
        <position position="245"/>
    </location>
</feature>
<feature type="glycosylation site" description="N-linked (GlcNAc...) asparagine" evidence="4">
    <location>
        <position position="314"/>
    </location>
</feature>
<feature type="glycosylation site" description="N-linked (GlcNAc...) asparagine" evidence="4">
    <location>
        <position position="418"/>
    </location>
</feature>
<feature type="glycosylation site" description="N-linked (GlcNAc...) asparagine" evidence="4">
    <location>
        <position position="439"/>
    </location>
</feature>
<feature type="glycosylation site" description="N-linked (GlcNAc...) asparagine" evidence="4">
    <location>
        <position position="535"/>
    </location>
</feature>
<feature type="glycosylation site" description="N-linked (GlcNAc...) asparagine" evidence="4">
    <location>
        <position position="608"/>
    </location>
</feature>
<feature type="glycosylation site" description="N-linked (GlcNAc...) asparagine" evidence="4">
    <location>
        <position position="623"/>
    </location>
</feature>
<feature type="glycosylation site" description="N-linked (GlcNAc...) asparagine" evidence="4">
    <location>
        <position position="641"/>
    </location>
</feature>
<feature type="glycosylation site" description="N-linked (GlcNAc...) asparagine" evidence="4">
    <location>
        <position position="748"/>
    </location>
</feature>
<feature type="glycosylation site" description="N-linked (GlcNAc...) asparagine" evidence="4">
    <location>
        <position position="757"/>
    </location>
</feature>
<feature type="glycosylation site" description="N-linked (GlcNAc...) asparagine" evidence="4">
    <location>
        <position position="765"/>
    </location>
</feature>
<feature type="glycosylation site" description="N-linked (GlcNAc...) asparagine" evidence="4">
    <location>
        <position position="901"/>
    </location>
</feature>
<feature type="glycosylation site" description="N-linked (GlcNAc...) asparagine" evidence="4">
    <location>
        <position position="914"/>
    </location>
</feature>
<feature type="disulfide bond" evidence="2">
    <location>
        <begin position="33"/>
        <end position="52"/>
    </location>
</feature>
<feature type="disulfide bond" evidence="2">
    <location>
        <begin position="150"/>
        <end position="178"/>
    </location>
</feature>
<feature type="disulfide bond" evidence="2">
    <location>
        <begin position="182"/>
        <end position="205"/>
    </location>
</feature>
<feature type="disulfide bond" evidence="2">
    <location>
        <begin position="192"/>
        <end position="211"/>
    </location>
</feature>
<feature type="disulfide bond" evidence="2">
    <location>
        <begin position="215"/>
        <end position="224"/>
    </location>
</feature>
<feature type="disulfide bond" evidence="2">
    <location>
        <begin position="219"/>
        <end position="230"/>
    </location>
</feature>
<feature type="disulfide bond" evidence="2">
    <location>
        <begin position="231"/>
        <end position="239"/>
    </location>
</feature>
<feature type="disulfide bond" evidence="2">
    <location>
        <begin position="235"/>
        <end position="248"/>
    </location>
</feature>
<feature type="disulfide bond" evidence="2">
    <location>
        <begin position="251"/>
        <end position="260"/>
    </location>
</feature>
<feature type="disulfide bond" evidence="2">
    <location>
        <begin position="264"/>
        <end position="276"/>
    </location>
</feature>
<feature type="disulfide bond" evidence="2">
    <location>
        <begin position="282"/>
        <end position="303"/>
    </location>
</feature>
<feature type="disulfide bond" evidence="2">
    <location>
        <begin position="307"/>
        <end position="321"/>
    </location>
</feature>
<feature type="disulfide bond" evidence="2">
    <location>
        <begin position="324"/>
        <end position="328"/>
    </location>
</feature>
<feature type="disulfide bond" evidence="2">
    <location>
        <begin position="332"/>
        <end position="354"/>
    </location>
</feature>
<feature type="disulfide bond" evidence="2">
    <location>
        <begin position="456"/>
        <end position="489"/>
    </location>
</feature>
<feature type="cross-link" description="Glycyl lysine isopeptide (Lys-Gly) (interchain with G-Cter in ubiquitin)" evidence="2">
    <location>
        <position position="1169"/>
    </location>
</feature>
<feature type="cross-link" description="Glycyl lysine isopeptide (Lys-Gly) (interchain with G-Cter in ubiquitin)" evidence="2">
    <location>
        <position position="1172"/>
    </location>
</feature>
<feature type="sequence conflict" description="In Ref. 3; no nucleotide entry." evidence="10" ref="3">
    <original>AD</original>
    <variation>PY</variation>
    <location>
        <begin position="985"/>
        <end position="986"/>
    </location>
</feature>
<dbReference type="EC" id="2.7.10.1"/>
<dbReference type="EMBL" id="L29232">
    <property type="protein sequence ID" value="AAA41392.1"/>
    <property type="molecule type" value="mRNA"/>
</dbReference>
<dbReference type="EMBL" id="M27293">
    <property type="protein sequence ID" value="AAA41384.1"/>
    <property type="molecule type" value="mRNA"/>
</dbReference>
<dbReference type="RefSeq" id="NP_434694.1">
    <property type="nucleotide sequence ID" value="NM_052807.3"/>
</dbReference>
<dbReference type="SMR" id="P24062"/>
<dbReference type="BioGRID" id="247747">
    <property type="interactions" value="2"/>
</dbReference>
<dbReference type="FunCoup" id="P24062">
    <property type="interactions" value="1305"/>
</dbReference>
<dbReference type="STRING" id="10116.ENSRNOP00000019267"/>
<dbReference type="BindingDB" id="P24062"/>
<dbReference type="ChEMBL" id="CHEMBL1075098"/>
<dbReference type="GlyCosmos" id="P24062">
    <property type="glycosylation" value="16 sites, No reported glycans"/>
</dbReference>
<dbReference type="GlyGen" id="P24062">
    <property type="glycosylation" value="16 sites"/>
</dbReference>
<dbReference type="iPTMnet" id="P24062"/>
<dbReference type="PhosphoSitePlus" id="P24062"/>
<dbReference type="PaxDb" id="10116-ENSRNOP00000019267"/>
<dbReference type="Ensembl" id="ENSRNOT00000019267.7">
    <property type="protein sequence ID" value="ENSRNOP00000019267.7"/>
    <property type="gene ID" value="ENSRNOG00000014187.7"/>
</dbReference>
<dbReference type="GeneID" id="25718"/>
<dbReference type="KEGG" id="rno:25718"/>
<dbReference type="UCSC" id="RGD:2869">
    <property type="organism name" value="rat"/>
</dbReference>
<dbReference type="AGR" id="RGD:2869"/>
<dbReference type="CTD" id="3480"/>
<dbReference type="RGD" id="2869">
    <property type="gene designation" value="Igf1r"/>
</dbReference>
<dbReference type="eggNOG" id="KOG4258">
    <property type="taxonomic scope" value="Eukaryota"/>
</dbReference>
<dbReference type="GeneTree" id="ENSGT00940000156682"/>
<dbReference type="HOGENOM" id="CLU_000288_166_0_1"/>
<dbReference type="InParanoid" id="P24062"/>
<dbReference type="OMA" id="FRGYAFK"/>
<dbReference type="PhylomeDB" id="P24062"/>
<dbReference type="BRENDA" id="2.7.10.1">
    <property type="organism ID" value="5301"/>
</dbReference>
<dbReference type="Reactome" id="R-RNO-2404192">
    <property type="pathway name" value="Signaling by Type 1 Insulin-like Growth Factor 1 Receptor (IGF1R)"/>
</dbReference>
<dbReference type="Reactome" id="R-RNO-2428928">
    <property type="pathway name" value="IRS-related events triggered by IGF1R"/>
</dbReference>
<dbReference type="Reactome" id="R-RNO-2428933">
    <property type="pathway name" value="SHC-related events triggered by IGF1R"/>
</dbReference>
<dbReference type="Reactome" id="R-RNO-9009391">
    <property type="pathway name" value="Extra-nuclear estrogen signaling"/>
</dbReference>
<dbReference type="PRO" id="PR:P24062"/>
<dbReference type="Proteomes" id="UP000002494">
    <property type="component" value="Chromosome 1"/>
</dbReference>
<dbReference type="GO" id="GO:0035867">
    <property type="term" value="C:alphav-beta3 integrin-IGF-1-IGF1R complex"/>
    <property type="evidence" value="ECO:0000266"/>
    <property type="project" value="RGD"/>
</dbReference>
<dbReference type="GO" id="GO:0030424">
    <property type="term" value="C:axon"/>
    <property type="evidence" value="ECO:0000314"/>
    <property type="project" value="RGD"/>
</dbReference>
<dbReference type="GO" id="GO:0005901">
    <property type="term" value="C:caveola"/>
    <property type="evidence" value="ECO:0000314"/>
    <property type="project" value="RGD"/>
</dbReference>
<dbReference type="GO" id="GO:0098978">
    <property type="term" value="C:glutamatergic synapse"/>
    <property type="evidence" value="ECO:0000266"/>
    <property type="project" value="RGD"/>
</dbReference>
<dbReference type="GO" id="GO:0005899">
    <property type="term" value="C:insulin receptor complex"/>
    <property type="evidence" value="ECO:0000318"/>
    <property type="project" value="GO_Central"/>
</dbReference>
<dbReference type="GO" id="GO:0043231">
    <property type="term" value="C:intracellular membrane-bounded organelle"/>
    <property type="evidence" value="ECO:0000266"/>
    <property type="project" value="RGD"/>
</dbReference>
<dbReference type="GO" id="GO:0016020">
    <property type="term" value="C:membrane"/>
    <property type="evidence" value="ECO:0000266"/>
    <property type="project" value="RGD"/>
</dbReference>
<dbReference type="GO" id="GO:0043025">
    <property type="term" value="C:neuronal cell body"/>
    <property type="evidence" value="ECO:0000314"/>
    <property type="project" value="RGD"/>
</dbReference>
<dbReference type="GO" id="GO:0005886">
    <property type="term" value="C:plasma membrane"/>
    <property type="evidence" value="ECO:0000266"/>
    <property type="project" value="RGD"/>
</dbReference>
<dbReference type="GO" id="GO:0098794">
    <property type="term" value="C:postsynapse"/>
    <property type="evidence" value="ECO:0007669"/>
    <property type="project" value="GOC"/>
</dbReference>
<dbReference type="GO" id="GO:1902911">
    <property type="term" value="C:protein kinase complex"/>
    <property type="evidence" value="ECO:0000266"/>
    <property type="project" value="RGD"/>
</dbReference>
<dbReference type="GO" id="GO:0043235">
    <property type="term" value="C:receptor complex"/>
    <property type="evidence" value="ECO:0000266"/>
    <property type="project" value="RGD"/>
</dbReference>
<dbReference type="GO" id="GO:0030315">
    <property type="term" value="C:T-tubule"/>
    <property type="evidence" value="ECO:0000314"/>
    <property type="project" value="RGD"/>
</dbReference>
<dbReference type="GO" id="GO:0005524">
    <property type="term" value="F:ATP binding"/>
    <property type="evidence" value="ECO:0007669"/>
    <property type="project" value="UniProtKB-KW"/>
</dbReference>
<dbReference type="GO" id="GO:0001965">
    <property type="term" value="F:G-protein alpha-subunit binding"/>
    <property type="evidence" value="ECO:0000353"/>
    <property type="project" value="RGD"/>
</dbReference>
<dbReference type="GO" id="GO:0042802">
    <property type="term" value="F:identical protein binding"/>
    <property type="evidence" value="ECO:0000266"/>
    <property type="project" value="RGD"/>
</dbReference>
<dbReference type="GO" id="GO:0043559">
    <property type="term" value="F:insulin binding"/>
    <property type="evidence" value="ECO:0000266"/>
    <property type="project" value="RGD"/>
</dbReference>
<dbReference type="GO" id="GO:0005009">
    <property type="term" value="F:insulin receptor activity"/>
    <property type="evidence" value="ECO:0000318"/>
    <property type="project" value="GO_Central"/>
</dbReference>
<dbReference type="GO" id="GO:0005158">
    <property type="term" value="F:insulin receptor binding"/>
    <property type="evidence" value="ECO:0000266"/>
    <property type="project" value="RGD"/>
</dbReference>
<dbReference type="GO" id="GO:0043560">
    <property type="term" value="F:insulin receptor substrate binding"/>
    <property type="evidence" value="ECO:0000353"/>
    <property type="project" value="RGD"/>
</dbReference>
<dbReference type="GO" id="GO:0005520">
    <property type="term" value="F:insulin-like growth factor binding"/>
    <property type="evidence" value="ECO:0000250"/>
    <property type="project" value="UniProtKB"/>
</dbReference>
<dbReference type="GO" id="GO:0031994">
    <property type="term" value="F:insulin-like growth factor I binding"/>
    <property type="evidence" value="ECO:0000266"/>
    <property type="project" value="RGD"/>
</dbReference>
<dbReference type="GO" id="GO:0005010">
    <property type="term" value="F:insulin-like growth factor receptor activity"/>
    <property type="evidence" value="ECO:0000314"/>
    <property type="project" value="RGD"/>
</dbReference>
<dbReference type="GO" id="GO:0043548">
    <property type="term" value="F:phosphatidylinositol 3-kinase binding"/>
    <property type="evidence" value="ECO:0000250"/>
    <property type="project" value="UniProtKB"/>
</dbReference>
<dbReference type="GO" id="GO:0140318">
    <property type="term" value="F:protein transporter activity"/>
    <property type="evidence" value="ECO:0000266"/>
    <property type="project" value="RGD"/>
</dbReference>
<dbReference type="GO" id="GO:0004713">
    <property type="term" value="F:protein tyrosine kinase activity"/>
    <property type="evidence" value="ECO:0000314"/>
    <property type="project" value="RGD"/>
</dbReference>
<dbReference type="GO" id="GO:0044877">
    <property type="term" value="F:protein-containing complex binding"/>
    <property type="evidence" value="ECO:0000314"/>
    <property type="project" value="RGD"/>
</dbReference>
<dbReference type="GO" id="GO:0005198">
    <property type="term" value="F:structural molecule activity"/>
    <property type="evidence" value="ECO:0000250"/>
    <property type="project" value="UniProtKB"/>
</dbReference>
<dbReference type="GO" id="GO:0030325">
    <property type="term" value="P:adrenal gland development"/>
    <property type="evidence" value="ECO:0000266"/>
    <property type="project" value="RGD"/>
</dbReference>
<dbReference type="GO" id="GO:0097242">
    <property type="term" value="P:amyloid-beta clearance"/>
    <property type="evidence" value="ECO:0000266"/>
    <property type="project" value="RGD"/>
</dbReference>
<dbReference type="GO" id="GO:0009887">
    <property type="term" value="P:animal organ morphogenesis"/>
    <property type="evidence" value="ECO:0000266"/>
    <property type="project" value="RGD"/>
</dbReference>
<dbReference type="GO" id="GO:0007409">
    <property type="term" value="P:axonogenesis"/>
    <property type="evidence" value="ECO:0000315"/>
    <property type="project" value="RGD"/>
</dbReference>
<dbReference type="GO" id="GO:0007420">
    <property type="term" value="P:brain development"/>
    <property type="evidence" value="ECO:0000266"/>
    <property type="project" value="RGD"/>
</dbReference>
<dbReference type="GO" id="GO:0003230">
    <property type="term" value="P:cardiac atrium development"/>
    <property type="evidence" value="ECO:0000270"/>
    <property type="project" value="RGD"/>
</dbReference>
<dbReference type="GO" id="GO:1904045">
    <property type="term" value="P:cellular response to aldosterone"/>
    <property type="evidence" value="ECO:0000270"/>
    <property type="project" value="RGD"/>
</dbReference>
<dbReference type="GO" id="GO:1904646">
    <property type="term" value="P:cellular response to amyloid-beta"/>
    <property type="evidence" value="ECO:0000266"/>
    <property type="project" value="RGD"/>
</dbReference>
<dbReference type="GO" id="GO:1904385">
    <property type="term" value="P:cellular response to angiotensin"/>
    <property type="evidence" value="ECO:0000270"/>
    <property type="project" value="RGD"/>
</dbReference>
<dbReference type="GO" id="GO:0071549">
    <property type="term" value="P:cellular response to dexamethasone stimulus"/>
    <property type="evidence" value="ECO:0000270"/>
    <property type="project" value="RGD"/>
</dbReference>
<dbReference type="GO" id="GO:0071392">
    <property type="term" value="P:cellular response to estradiol stimulus"/>
    <property type="evidence" value="ECO:0000270"/>
    <property type="project" value="RGD"/>
</dbReference>
<dbReference type="GO" id="GO:0071333">
    <property type="term" value="P:cellular response to glucose stimulus"/>
    <property type="evidence" value="ECO:0000270"/>
    <property type="project" value="RGD"/>
</dbReference>
<dbReference type="GO" id="GO:0032869">
    <property type="term" value="P:cellular response to insulin stimulus"/>
    <property type="evidence" value="ECO:0000270"/>
    <property type="project" value="RGD"/>
</dbReference>
<dbReference type="GO" id="GO:1990314">
    <property type="term" value="P:cellular response to insulin-like growth factor stimulus"/>
    <property type="evidence" value="ECO:0000353"/>
    <property type="project" value="RGD"/>
</dbReference>
<dbReference type="GO" id="GO:0071260">
    <property type="term" value="P:cellular response to mechanical stimulus"/>
    <property type="evidence" value="ECO:0000270"/>
    <property type="project" value="RGD"/>
</dbReference>
<dbReference type="GO" id="GO:0071393">
    <property type="term" value="P:cellular response to progesterone stimulus"/>
    <property type="evidence" value="ECO:0000270"/>
    <property type="project" value="RGD"/>
</dbReference>
<dbReference type="GO" id="GO:0071394">
    <property type="term" value="P:cellular response to testosterone stimulus"/>
    <property type="evidence" value="ECO:0000270"/>
    <property type="project" value="RGD"/>
</dbReference>
<dbReference type="GO" id="GO:0071560">
    <property type="term" value="P:cellular response to transforming growth factor beta stimulus"/>
    <property type="evidence" value="ECO:0000353"/>
    <property type="project" value="RGD"/>
</dbReference>
<dbReference type="GO" id="GO:0034224">
    <property type="term" value="P:cellular response to zinc ion starvation"/>
    <property type="evidence" value="ECO:0000270"/>
    <property type="project" value="RGD"/>
</dbReference>
<dbReference type="GO" id="GO:0090398">
    <property type="term" value="P:cellular senescence"/>
    <property type="evidence" value="ECO:0000270"/>
    <property type="project" value="RGD"/>
</dbReference>
<dbReference type="GO" id="GO:0021549">
    <property type="term" value="P:cerebellum development"/>
    <property type="evidence" value="ECO:0000315"/>
    <property type="project" value="RGD"/>
</dbReference>
<dbReference type="GO" id="GO:0097062">
    <property type="term" value="P:dendritic spine maintenance"/>
    <property type="evidence" value="ECO:0000316"/>
    <property type="project" value="ARUK-UCL"/>
</dbReference>
<dbReference type="GO" id="GO:0008544">
    <property type="term" value="P:epidermis development"/>
    <property type="evidence" value="ECO:0000266"/>
    <property type="project" value="RGD"/>
</dbReference>
<dbReference type="GO" id="GO:0030010">
    <property type="term" value="P:establishment of cell polarity"/>
    <property type="evidence" value="ECO:0000315"/>
    <property type="project" value="RGD"/>
</dbReference>
<dbReference type="GO" id="GO:0044849">
    <property type="term" value="P:estrous cycle"/>
    <property type="evidence" value="ECO:0000315"/>
    <property type="project" value="RGD"/>
</dbReference>
<dbReference type="GO" id="GO:0031017">
    <property type="term" value="P:exocrine pancreas development"/>
    <property type="evidence" value="ECO:0000266"/>
    <property type="project" value="RGD"/>
</dbReference>
<dbReference type="GO" id="GO:0021766">
    <property type="term" value="P:hippocampus development"/>
    <property type="evidence" value="ECO:0000270"/>
    <property type="project" value="RGD"/>
</dbReference>
<dbReference type="GO" id="GO:0006955">
    <property type="term" value="P:immune response"/>
    <property type="evidence" value="ECO:0000266"/>
    <property type="project" value="RGD"/>
</dbReference>
<dbReference type="GO" id="GO:0008286">
    <property type="term" value="P:insulin receptor signaling pathway"/>
    <property type="evidence" value="ECO:0000315"/>
    <property type="project" value="ARUK-UCL"/>
</dbReference>
<dbReference type="GO" id="GO:0048009">
    <property type="term" value="P:insulin-like growth factor receptor signaling pathway"/>
    <property type="evidence" value="ECO:0000250"/>
    <property type="project" value="UniProtKB"/>
</dbReference>
<dbReference type="GO" id="GO:0030238">
    <property type="term" value="P:male sex determination"/>
    <property type="evidence" value="ECO:0000266"/>
    <property type="project" value="RGD"/>
</dbReference>
<dbReference type="GO" id="GO:0030879">
    <property type="term" value="P:mammary gland development"/>
    <property type="evidence" value="ECO:0000266"/>
    <property type="project" value="RGD"/>
</dbReference>
<dbReference type="GO" id="GO:0000165">
    <property type="term" value="P:MAPK cascade"/>
    <property type="evidence" value="ECO:0000266"/>
    <property type="project" value="RGD"/>
</dbReference>
<dbReference type="GO" id="GO:0140014">
    <property type="term" value="P:mitotic nuclear division"/>
    <property type="evidence" value="ECO:0000266"/>
    <property type="project" value="RGD"/>
</dbReference>
<dbReference type="GO" id="GO:0043066">
    <property type="term" value="P:negative regulation of apoptotic process"/>
    <property type="evidence" value="ECO:0000250"/>
    <property type="project" value="UniProtKB"/>
</dbReference>
<dbReference type="GO" id="GO:1904193">
    <property type="term" value="P:negative regulation of cholangiocyte apoptotic process"/>
    <property type="evidence" value="ECO:0000315"/>
    <property type="project" value="RGD"/>
</dbReference>
<dbReference type="GO" id="GO:1903944">
    <property type="term" value="P:negative regulation of hepatocyte apoptotic process"/>
    <property type="evidence" value="ECO:0000315"/>
    <property type="project" value="RGD"/>
</dbReference>
<dbReference type="GO" id="GO:0043409">
    <property type="term" value="P:negative regulation of MAPK cascade"/>
    <property type="evidence" value="ECO:0000250"/>
    <property type="project" value="UniProtKB"/>
</dbReference>
<dbReference type="GO" id="GO:0010656">
    <property type="term" value="P:negative regulation of muscle cell apoptotic process"/>
    <property type="evidence" value="ECO:0000315"/>
    <property type="project" value="RGD"/>
</dbReference>
<dbReference type="GO" id="GO:0051898">
    <property type="term" value="P:negative regulation of phosphatidylinositol 3-kinase/protein kinase B signal transduction"/>
    <property type="evidence" value="ECO:0000266"/>
    <property type="project" value="RGD"/>
</dbReference>
<dbReference type="GO" id="GO:0031175">
    <property type="term" value="P:neuron projection development"/>
    <property type="evidence" value="ECO:0000314"/>
    <property type="project" value="RGD"/>
</dbReference>
<dbReference type="GO" id="GO:0043491">
    <property type="term" value="P:phosphatidylinositol 3-kinase/protein kinase B signal transduction"/>
    <property type="evidence" value="ECO:0000266"/>
    <property type="project" value="RGD"/>
</dbReference>
<dbReference type="GO" id="GO:0048680">
    <property type="term" value="P:positive regulation of axon regeneration"/>
    <property type="evidence" value="ECO:0000315"/>
    <property type="project" value="RGD"/>
</dbReference>
<dbReference type="GO" id="GO:0030335">
    <property type="term" value="P:positive regulation of cell migration"/>
    <property type="evidence" value="ECO:0000266"/>
    <property type="project" value="RGD"/>
</dbReference>
<dbReference type="GO" id="GO:0008284">
    <property type="term" value="P:positive regulation of cell population proliferation"/>
    <property type="evidence" value="ECO:0000266"/>
    <property type="project" value="RGD"/>
</dbReference>
<dbReference type="GO" id="GO:0120162">
    <property type="term" value="P:positive regulation of cold-induced thermogenesis"/>
    <property type="evidence" value="ECO:0000250"/>
    <property type="project" value="YuBioLab"/>
</dbReference>
<dbReference type="GO" id="GO:0032467">
    <property type="term" value="P:positive regulation of cytokinesis"/>
    <property type="evidence" value="ECO:0000315"/>
    <property type="project" value="RGD"/>
</dbReference>
<dbReference type="GO" id="GO:0048639">
    <property type="term" value="P:positive regulation of developmental growth"/>
    <property type="evidence" value="ECO:0000266"/>
    <property type="project" value="RGD"/>
</dbReference>
<dbReference type="GO" id="GO:0051054">
    <property type="term" value="P:positive regulation of DNA metabolic process"/>
    <property type="evidence" value="ECO:0000315"/>
    <property type="project" value="RGD"/>
</dbReference>
<dbReference type="GO" id="GO:0045893">
    <property type="term" value="P:positive regulation of DNA-templated transcription"/>
    <property type="evidence" value="ECO:0000266"/>
    <property type="project" value="RGD"/>
</dbReference>
<dbReference type="GO" id="GO:0043410">
    <property type="term" value="P:positive regulation of MAPK cascade"/>
    <property type="evidence" value="ECO:0000266"/>
    <property type="project" value="RGD"/>
</dbReference>
<dbReference type="GO" id="GO:0051446">
    <property type="term" value="P:positive regulation of meiotic cell cycle"/>
    <property type="evidence" value="ECO:0000266"/>
    <property type="project" value="RGD"/>
</dbReference>
<dbReference type="GO" id="GO:0045840">
    <property type="term" value="P:positive regulation of mitotic nuclear division"/>
    <property type="evidence" value="ECO:0000266"/>
    <property type="project" value="RGD"/>
</dbReference>
<dbReference type="GO" id="GO:0033690">
    <property type="term" value="P:positive regulation of osteoblast proliferation"/>
    <property type="evidence" value="ECO:0000315"/>
    <property type="project" value="RGD"/>
</dbReference>
<dbReference type="GO" id="GO:0051897">
    <property type="term" value="P:positive regulation of phosphatidylinositol 3-kinase/protein kinase B signal transduction"/>
    <property type="evidence" value="ECO:0000315"/>
    <property type="project" value="RGD"/>
</dbReference>
<dbReference type="GO" id="GO:0043243">
    <property type="term" value="P:positive regulation of protein-containing complex disassembly"/>
    <property type="evidence" value="ECO:0000316"/>
    <property type="project" value="ARUK-UCL"/>
</dbReference>
<dbReference type="GO" id="GO:0048661">
    <property type="term" value="P:positive regulation of smooth muscle cell proliferation"/>
    <property type="evidence" value="ECO:0000315"/>
    <property type="project" value="RGD"/>
</dbReference>
<dbReference type="GO" id="GO:0090031">
    <property type="term" value="P:positive regulation of steroid hormone biosynthetic process"/>
    <property type="evidence" value="ECO:0000315"/>
    <property type="project" value="BHF-UCL"/>
</dbReference>
<dbReference type="GO" id="GO:0099170">
    <property type="term" value="P:postsynaptic modulation of chemical synaptic transmission"/>
    <property type="evidence" value="ECO:0000266"/>
    <property type="project" value="RGD"/>
</dbReference>
<dbReference type="GO" id="GO:0060740">
    <property type="term" value="P:prostate gland epithelium morphogenesis"/>
    <property type="evidence" value="ECO:0000266"/>
    <property type="project" value="RGD"/>
</dbReference>
<dbReference type="GO" id="GO:0046777">
    <property type="term" value="P:protein autophosphorylation"/>
    <property type="evidence" value="ECO:0000250"/>
    <property type="project" value="UniProtKB"/>
</dbReference>
<dbReference type="GO" id="GO:0046328">
    <property type="term" value="P:regulation of JNK cascade"/>
    <property type="evidence" value="ECO:0000250"/>
    <property type="project" value="UniProtKB"/>
</dbReference>
<dbReference type="GO" id="GO:0043279">
    <property type="term" value="P:response to alkaloid"/>
    <property type="evidence" value="ECO:0000270"/>
    <property type="project" value="RGD"/>
</dbReference>
<dbReference type="GO" id="GO:0045471">
    <property type="term" value="P:response to ethanol"/>
    <property type="evidence" value="ECO:0000314"/>
    <property type="project" value="RGD"/>
</dbReference>
<dbReference type="GO" id="GO:0009725">
    <property type="term" value="P:response to hormone"/>
    <property type="evidence" value="ECO:0000270"/>
    <property type="project" value="RGD"/>
</dbReference>
<dbReference type="GO" id="GO:0032868">
    <property type="term" value="P:response to insulin"/>
    <property type="evidence" value="ECO:0000270"/>
    <property type="project" value="RGD"/>
</dbReference>
<dbReference type="GO" id="GO:1902065">
    <property type="term" value="P:response to L-glutamate"/>
    <property type="evidence" value="ECO:0000314"/>
    <property type="project" value="RGD"/>
</dbReference>
<dbReference type="GO" id="GO:0035094">
    <property type="term" value="P:response to nicotine"/>
    <property type="evidence" value="ECO:0000270"/>
    <property type="project" value="RGD"/>
</dbReference>
<dbReference type="GO" id="GO:0031667">
    <property type="term" value="P:response to nutrient levels"/>
    <property type="evidence" value="ECO:0000270"/>
    <property type="project" value="RGD"/>
</dbReference>
<dbReference type="GO" id="GO:0033197">
    <property type="term" value="P:response to vitamin E"/>
    <property type="evidence" value="ECO:0000270"/>
    <property type="project" value="RGD"/>
</dbReference>
<dbReference type="GO" id="GO:0045056">
    <property type="term" value="P:transcytosis"/>
    <property type="evidence" value="ECO:0000266"/>
    <property type="project" value="RGD"/>
</dbReference>
<dbReference type="CDD" id="cd00063">
    <property type="entry name" value="FN3"/>
    <property type="match status" value="3"/>
</dbReference>
<dbReference type="CDD" id="cd00064">
    <property type="entry name" value="FU"/>
    <property type="match status" value="1"/>
</dbReference>
<dbReference type="CDD" id="cd05032">
    <property type="entry name" value="PTKc_InsR_like"/>
    <property type="match status" value="1"/>
</dbReference>
<dbReference type="FunFam" id="2.60.40.10:FF:002810">
    <property type="entry name" value="Insulin-like growth factor 1 receptor"/>
    <property type="match status" value="1"/>
</dbReference>
<dbReference type="FunFam" id="1.10.510.10:FF:000050">
    <property type="entry name" value="Tyrosine-protein kinase receptor"/>
    <property type="match status" value="1"/>
</dbReference>
<dbReference type="FunFam" id="2.10.220.10:FF:000007">
    <property type="entry name" value="Tyrosine-protein kinase receptor"/>
    <property type="match status" value="1"/>
</dbReference>
<dbReference type="FunFam" id="2.60.40.10:FF:000087">
    <property type="entry name" value="Tyrosine-protein kinase receptor"/>
    <property type="match status" value="1"/>
</dbReference>
<dbReference type="FunFam" id="2.60.40.10:FF:002452">
    <property type="entry name" value="Tyrosine-protein kinase receptor"/>
    <property type="match status" value="1"/>
</dbReference>
<dbReference type="FunFam" id="3.30.200.20:FF:000026">
    <property type="entry name" value="Tyrosine-protein kinase receptor"/>
    <property type="match status" value="1"/>
</dbReference>
<dbReference type="FunFam" id="3.80.20.20:FF:000001">
    <property type="entry name" value="Tyrosine-protein kinase receptor"/>
    <property type="match status" value="1"/>
</dbReference>
<dbReference type="FunFam" id="3.80.20.20:FF:000002">
    <property type="entry name" value="Tyrosine-protein kinase receptor"/>
    <property type="match status" value="1"/>
</dbReference>
<dbReference type="Gene3D" id="2.10.220.10">
    <property type="entry name" value="Hormone Receptor, Insulin-like Growth Factor Receptor 1, Chain A, domain 2"/>
    <property type="match status" value="1"/>
</dbReference>
<dbReference type="Gene3D" id="2.60.40.10">
    <property type="entry name" value="Immunoglobulins"/>
    <property type="match status" value="3"/>
</dbReference>
<dbReference type="Gene3D" id="3.30.200.20">
    <property type="entry name" value="Phosphorylase Kinase, domain 1"/>
    <property type="match status" value="1"/>
</dbReference>
<dbReference type="Gene3D" id="3.80.20.20">
    <property type="entry name" value="Receptor L-domain"/>
    <property type="match status" value="2"/>
</dbReference>
<dbReference type="Gene3D" id="1.10.510.10">
    <property type="entry name" value="Transferase(Phosphotransferase) domain 1"/>
    <property type="match status" value="1"/>
</dbReference>
<dbReference type="InterPro" id="IPR003961">
    <property type="entry name" value="FN3_dom"/>
</dbReference>
<dbReference type="InterPro" id="IPR036116">
    <property type="entry name" value="FN3_sf"/>
</dbReference>
<dbReference type="InterPro" id="IPR006211">
    <property type="entry name" value="Furin-like_Cys-rich_dom"/>
</dbReference>
<dbReference type="InterPro" id="IPR006212">
    <property type="entry name" value="Furin_repeat"/>
</dbReference>
<dbReference type="InterPro" id="IPR009030">
    <property type="entry name" value="Growth_fac_rcpt_cys_sf"/>
</dbReference>
<dbReference type="InterPro" id="IPR013783">
    <property type="entry name" value="Ig-like_fold"/>
</dbReference>
<dbReference type="InterPro" id="IPR011009">
    <property type="entry name" value="Kinase-like_dom_sf"/>
</dbReference>
<dbReference type="InterPro" id="IPR000719">
    <property type="entry name" value="Prot_kinase_dom"/>
</dbReference>
<dbReference type="InterPro" id="IPR017441">
    <property type="entry name" value="Protein_kinase_ATP_BS"/>
</dbReference>
<dbReference type="InterPro" id="IPR000494">
    <property type="entry name" value="Rcpt_L-dom"/>
</dbReference>
<dbReference type="InterPro" id="IPR036941">
    <property type="entry name" value="Rcpt_L-dom_sf"/>
</dbReference>
<dbReference type="InterPro" id="IPR050122">
    <property type="entry name" value="RTK"/>
</dbReference>
<dbReference type="InterPro" id="IPR001245">
    <property type="entry name" value="Ser-Thr/Tyr_kinase_cat_dom"/>
</dbReference>
<dbReference type="InterPro" id="IPR008266">
    <property type="entry name" value="Tyr_kinase_AS"/>
</dbReference>
<dbReference type="InterPro" id="IPR020635">
    <property type="entry name" value="Tyr_kinase_cat_dom"/>
</dbReference>
<dbReference type="InterPro" id="IPR016246">
    <property type="entry name" value="Tyr_kinase_insulin-like_rcpt"/>
</dbReference>
<dbReference type="InterPro" id="IPR002011">
    <property type="entry name" value="Tyr_kinase_rcpt_2_CS"/>
</dbReference>
<dbReference type="PANTHER" id="PTHR24416:SF106">
    <property type="entry name" value="INSULIN-LIKE GROWTH FACTOR 1 RECEPTOR"/>
    <property type="match status" value="1"/>
</dbReference>
<dbReference type="PANTHER" id="PTHR24416">
    <property type="entry name" value="TYROSINE-PROTEIN KINASE RECEPTOR"/>
    <property type="match status" value="1"/>
</dbReference>
<dbReference type="Pfam" id="PF00757">
    <property type="entry name" value="Furin-like"/>
    <property type="match status" value="1"/>
</dbReference>
<dbReference type="Pfam" id="PF07714">
    <property type="entry name" value="PK_Tyr_Ser-Thr"/>
    <property type="match status" value="1"/>
</dbReference>
<dbReference type="Pfam" id="PF01030">
    <property type="entry name" value="Recep_L_domain"/>
    <property type="match status" value="2"/>
</dbReference>
<dbReference type="PIRSF" id="PIRSF000620">
    <property type="entry name" value="Insulin_receptor"/>
    <property type="match status" value="1"/>
</dbReference>
<dbReference type="PRINTS" id="PR00109">
    <property type="entry name" value="TYRKINASE"/>
</dbReference>
<dbReference type="SMART" id="SM00060">
    <property type="entry name" value="FN3"/>
    <property type="match status" value="3"/>
</dbReference>
<dbReference type="SMART" id="SM00261">
    <property type="entry name" value="FU"/>
    <property type="match status" value="1"/>
</dbReference>
<dbReference type="SMART" id="SM00219">
    <property type="entry name" value="TyrKc"/>
    <property type="match status" value="1"/>
</dbReference>
<dbReference type="SUPFAM" id="SSF49265">
    <property type="entry name" value="Fibronectin type III"/>
    <property type="match status" value="3"/>
</dbReference>
<dbReference type="SUPFAM" id="SSF57184">
    <property type="entry name" value="Growth factor receptor domain"/>
    <property type="match status" value="1"/>
</dbReference>
<dbReference type="SUPFAM" id="SSF52058">
    <property type="entry name" value="L domain-like"/>
    <property type="match status" value="2"/>
</dbReference>
<dbReference type="SUPFAM" id="SSF56112">
    <property type="entry name" value="Protein kinase-like (PK-like)"/>
    <property type="match status" value="1"/>
</dbReference>
<dbReference type="PROSITE" id="PS50853">
    <property type="entry name" value="FN3"/>
    <property type="match status" value="3"/>
</dbReference>
<dbReference type="PROSITE" id="PS00107">
    <property type="entry name" value="PROTEIN_KINASE_ATP"/>
    <property type="match status" value="1"/>
</dbReference>
<dbReference type="PROSITE" id="PS50011">
    <property type="entry name" value="PROTEIN_KINASE_DOM"/>
    <property type="match status" value="1"/>
</dbReference>
<dbReference type="PROSITE" id="PS00109">
    <property type="entry name" value="PROTEIN_KINASE_TYR"/>
    <property type="match status" value="1"/>
</dbReference>
<dbReference type="PROSITE" id="PS00239">
    <property type="entry name" value="RECEPTOR_TYR_KIN_II"/>
    <property type="match status" value="1"/>
</dbReference>